<accession>Q553M7</accession>
<accession>Q869K9</accession>
<reference key="1">
    <citation type="journal article" date="2002" name="Nature">
        <title>Sequence and analysis of chromosome 2 of Dictyostelium discoideum.</title>
        <authorList>
            <person name="Gloeckner G."/>
            <person name="Eichinger L."/>
            <person name="Szafranski K."/>
            <person name="Pachebat J.A."/>
            <person name="Bankier A.T."/>
            <person name="Dear P.H."/>
            <person name="Lehmann R."/>
            <person name="Baumgart C."/>
            <person name="Parra G."/>
            <person name="Abril J.F."/>
            <person name="Guigo R."/>
            <person name="Kumpf K."/>
            <person name="Tunggal B."/>
            <person name="Cox E.C."/>
            <person name="Quail M.A."/>
            <person name="Platzer M."/>
            <person name="Rosenthal A."/>
            <person name="Noegel A.A."/>
        </authorList>
    </citation>
    <scope>NUCLEOTIDE SEQUENCE [LARGE SCALE GENOMIC DNA]</scope>
    <source>
        <strain>AX4</strain>
    </source>
</reference>
<reference key="2">
    <citation type="journal article" date="2005" name="Nature">
        <title>The genome of the social amoeba Dictyostelium discoideum.</title>
        <authorList>
            <person name="Eichinger L."/>
            <person name="Pachebat J.A."/>
            <person name="Gloeckner G."/>
            <person name="Rajandream M.A."/>
            <person name="Sucgang R."/>
            <person name="Berriman M."/>
            <person name="Song J."/>
            <person name="Olsen R."/>
            <person name="Szafranski K."/>
            <person name="Xu Q."/>
            <person name="Tunggal B."/>
            <person name="Kummerfeld S."/>
            <person name="Madera M."/>
            <person name="Konfortov B.A."/>
            <person name="Rivero F."/>
            <person name="Bankier A.T."/>
            <person name="Lehmann R."/>
            <person name="Hamlin N."/>
            <person name="Davies R."/>
            <person name="Gaudet P."/>
            <person name="Fey P."/>
            <person name="Pilcher K."/>
            <person name="Chen G."/>
            <person name="Saunders D."/>
            <person name="Sodergren E.J."/>
            <person name="Davis P."/>
            <person name="Kerhornou A."/>
            <person name="Nie X."/>
            <person name="Hall N."/>
            <person name="Anjard C."/>
            <person name="Hemphill L."/>
            <person name="Bason N."/>
            <person name="Farbrother P."/>
            <person name="Desany B."/>
            <person name="Just E."/>
            <person name="Morio T."/>
            <person name="Rost R."/>
            <person name="Churcher C.M."/>
            <person name="Cooper J."/>
            <person name="Haydock S."/>
            <person name="van Driessche N."/>
            <person name="Cronin A."/>
            <person name="Goodhead I."/>
            <person name="Muzny D.M."/>
            <person name="Mourier T."/>
            <person name="Pain A."/>
            <person name="Lu M."/>
            <person name="Harper D."/>
            <person name="Lindsay R."/>
            <person name="Hauser H."/>
            <person name="James K.D."/>
            <person name="Quiles M."/>
            <person name="Madan Babu M."/>
            <person name="Saito T."/>
            <person name="Buchrieser C."/>
            <person name="Wardroper A."/>
            <person name="Felder M."/>
            <person name="Thangavelu M."/>
            <person name="Johnson D."/>
            <person name="Knights A."/>
            <person name="Loulseged H."/>
            <person name="Mungall K.L."/>
            <person name="Oliver K."/>
            <person name="Price C."/>
            <person name="Quail M.A."/>
            <person name="Urushihara H."/>
            <person name="Hernandez J."/>
            <person name="Rabbinowitsch E."/>
            <person name="Steffen D."/>
            <person name="Sanders M."/>
            <person name="Ma J."/>
            <person name="Kohara Y."/>
            <person name="Sharp S."/>
            <person name="Simmonds M.N."/>
            <person name="Spiegler S."/>
            <person name="Tivey A."/>
            <person name="Sugano S."/>
            <person name="White B."/>
            <person name="Walker D."/>
            <person name="Woodward J.R."/>
            <person name="Winckler T."/>
            <person name="Tanaka Y."/>
            <person name="Shaulsky G."/>
            <person name="Schleicher M."/>
            <person name="Weinstock G.M."/>
            <person name="Rosenthal A."/>
            <person name="Cox E.C."/>
            <person name="Chisholm R.L."/>
            <person name="Gibbs R.A."/>
            <person name="Loomis W.F."/>
            <person name="Platzer M."/>
            <person name="Kay R.R."/>
            <person name="Williams J.G."/>
            <person name="Dear P.H."/>
            <person name="Noegel A.A."/>
            <person name="Barrell B.G."/>
            <person name="Kuspa A."/>
        </authorList>
    </citation>
    <scope>NUCLEOTIDE SEQUENCE [LARGE SCALE GENOMIC DNA]</scope>
    <source>
        <strain>AX4</strain>
    </source>
</reference>
<reference key="3">
    <citation type="submission" date="2010-01" db="UniProtKB">
        <authorList>
            <person name="Bienvenut W.V."/>
            <person name="Veltman D.M."/>
            <person name="Insall R.H."/>
        </authorList>
    </citation>
    <scope>PROTEIN SEQUENCE OF 104-114; 118-125 AND 134-148</scope>
    <scope>IDENTIFICATION BY MASS SPECTROMETRY</scope>
</reference>
<proteinExistence type="evidence at protein level"/>
<comment type="similarity">
    <text evidence="1">Belongs to the universal ribosomal protein uL13 family.</text>
</comment>
<protein>
    <recommendedName>
        <fullName evidence="1">Large ribosomal subunit protein uL13</fullName>
    </recommendedName>
    <alternativeName>
        <fullName>60S ribosomal protein L13a</fullName>
    </alternativeName>
</protein>
<dbReference type="EMBL" id="AAFI02000013">
    <property type="protein sequence ID" value="EAL69691.1"/>
    <property type="molecule type" value="Genomic_DNA"/>
</dbReference>
<dbReference type="RefSeq" id="XP_643542.1">
    <property type="nucleotide sequence ID" value="XM_638450.1"/>
</dbReference>
<dbReference type="SMR" id="Q553M7"/>
<dbReference type="FunCoup" id="Q553M7">
    <property type="interactions" value="459"/>
</dbReference>
<dbReference type="STRING" id="44689.Q553M7"/>
<dbReference type="PaxDb" id="44689-DDB0231192"/>
<dbReference type="EnsemblProtists" id="EAL69691">
    <property type="protein sequence ID" value="EAL69691"/>
    <property type="gene ID" value="DDB_G0275881"/>
</dbReference>
<dbReference type="GeneID" id="8620124"/>
<dbReference type="KEGG" id="ddi:DDB_G0275881"/>
<dbReference type="dictyBase" id="DDB_G0275881">
    <property type="gene designation" value="rpl13a"/>
</dbReference>
<dbReference type="VEuPathDB" id="AmoebaDB:DDB_G0275881"/>
<dbReference type="eggNOG" id="KOG3204">
    <property type="taxonomic scope" value="Eukaryota"/>
</dbReference>
<dbReference type="HOGENOM" id="CLU_076922_0_0_1"/>
<dbReference type="InParanoid" id="Q553M7"/>
<dbReference type="OMA" id="TRFNKTH"/>
<dbReference type="PhylomeDB" id="Q553M7"/>
<dbReference type="Reactome" id="R-DDI-156827">
    <property type="pathway name" value="L13a-mediated translational silencing of Ceruloplasmin expression"/>
</dbReference>
<dbReference type="Reactome" id="R-DDI-1799339">
    <property type="pathway name" value="SRP-dependent cotranslational protein targeting to membrane"/>
</dbReference>
<dbReference type="Reactome" id="R-DDI-72689">
    <property type="pathway name" value="Formation of a pool of free 40S subunits"/>
</dbReference>
<dbReference type="Reactome" id="R-DDI-72706">
    <property type="pathway name" value="GTP hydrolysis and joining of the 60S ribosomal subunit"/>
</dbReference>
<dbReference type="Reactome" id="R-DDI-975956">
    <property type="pathway name" value="Nonsense Mediated Decay (NMD) independent of the Exon Junction Complex (EJC)"/>
</dbReference>
<dbReference type="Reactome" id="R-DDI-975957">
    <property type="pathway name" value="Nonsense Mediated Decay (NMD) enhanced by the Exon Junction Complex (EJC)"/>
</dbReference>
<dbReference type="PRO" id="PR:Q553M7"/>
<dbReference type="Proteomes" id="UP000002195">
    <property type="component" value="Chromosome 2"/>
</dbReference>
<dbReference type="GO" id="GO:0022625">
    <property type="term" value="C:cytosolic large ribosomal subunit"/>
    <property type="evidence" value="ECO:0000318"/>
    <property type="project" value="GO_Central"/>
</dbReference>
<dbReference type="GO" id="GO:0005840">
    <property type="term" value="C:ribosome"/>
    <property type="evidence" value="ECO:0000318"/>
    <property type="project" value="GO_Central"/>
</dbReference>
<dbReference type="GO" id="GO:0003729">
    <property type="term" value="F:mRNA binding"/>
    <property type="evidence" value="ECO:0000318"/>
    <property type="project" value="GO_Central"/>
</dbReference>
<dbReference type="GO" id="GO:0003735">
    <property type="term" value="F:structural constituent of ribosome"/>
    <property type="evidence" value="ECO:0000318"/>
    <property type="project" value="GO_Central"/>
</dbReference>
<dbReference type="GO" id="GO:0017148">
    <property type="term" value="P:negative regulation of translation"/>
    <property type="evidence" value="ECO:0000318"/>
    <property type="project" value="GO_Central"/>
</dbReference>
<dbReference type="GO" id="GO:0006412">
    <property type="term" value="P:translation"/>
    <property type="evidence" value="ECO:0007669"/>
    <property type="project" value="InterPro"/>
</dbReference>
<dbReference type="CDD" id="cd00392">
    <property type="entry name" value="Ribosomal_L13"/>
    <property type="match status" value="1"/>
</dbReference>
<dbReference type="FunFam" id="3.90.1180.10:FF:000002">
    <property type="entry name" value="60S ribosomal protein L16"/>
    <property type="match status" value="1"/>
</dbReference>
<dbReference type="Gene3D" id="3.90.1180.10">
    <property type="entry name" value="Ribosomal protein L13"/>
    <property type="match status" value="1"/>
</dbReference>
<dbReference type="HAMAP" id="MF_01366">
    <property type="entry name" value="Ribosomal_uL13"/>
    <property type="match status" value="1"/>
</dbReference>
<dbReference type="InterPro" id="IPR005822">
    <property type="entry name" value="Ribosomal_uL13"/>
</dbReference>
<dbReference type="InterPro" id="IPR023563">
    <property type="entry name" value="Ribosomal_uL13_CS"/>
</dbReference>
<dbReference type="InterPro" id="IPR005755">
    <property type="entry name" value="Ribosomal_uL13_euk/arc"/>
</dbReference>
<dbReference type="InterPro" id="IPR036899">
    <property type="entry name" value="Ribosomal_uL13_sf"/>
</dbReference>
<dbReference type="NCBIfam" id="TIGR01077">
    <property type="entry name" value="L13_A_E"/>
    <property type="match status" value="1"/>
</dbReference>
<dbReference type="PANTHER" id="PTHR11545:SF3">
    <property type="entry name" value="LARGE RIBOSOMAL SUBUNIT PROTEIN UL13"/>
    <property type="match status" value="1"/>
</dbReference>
<dbReference type="PANTHER" id="PTHR11545">
    <property type="entry name" value="RIBOSOMAL PROTEIN L13"/>
    <property type="match status" value="1"/>
</dbReference>
<dbReference type="Pfam" id="PF00572">
    <property type="entry name" value="Ribosomal_L13"/>
    <property type="match status" value="1"/>
</dbReference>
<dbReference type="SUPFAM" id="SSF52161">
    <property type="entry name" value="Ribosomal protein L13"/>
    <property type="match status" value="1"/>
</dbReference>
<dbReference type="PROSITE" id="PS00783">
    <property type="entry name" value="RIBOSOMAL_L13"/>
    <property type="match status" value="1"/>
</dbReference>
<feature type="chain" id="PRO_0000320043" description="Large ribosomal subunit protein uL13">
    <location>
        <begin position="1"/>
        <end position="187"/>
    </location>
</feature>
<name>RL13A_DICDI</name>
<gene>
    <name type="primary">rpl13a</name>
    <name type="ORF">DDB_G0275881</name>
</gene>
<organism>
    <name type="scientific">Dictyostelium discoideum</name>
    <name type="common">Social amoeba</name>
    <dbReference type="NCBI Taxonomy" id="44689"/>
    <lineage>
        <taxon>Eukaryota</taxon>
        <taxon>Amoebozoa</taxon>
        <taxon>Evosea</taxon>
        <taxon>Eumycetozoa</taxon>
        <taxon>Dictyostelia</taxon>
        <taxon>Dictyosteliales</taxon>
        <taxon>Dictyosteliaceae</taxon>
        <taxon>Dictyostelium</taxon>
    </lineage>
</organism>
<sequence>MFQKKAIVIDGKGHLLGRLASVVAKSLLSGQKIVVVRCEELNISGPLSRNKLKWADFLNLTMNTNHARGHRHGRSPSKIFWRAVRGMLPHKTPRGQAALDNMKVFEGVPAPYDKVKRVVVPSALRVVKLNTTRKYTVLSRLSQEVGWKYRAVVAKLEVQRKQRSSTYYRKAALVKAYRTQALKKFSA</sequence>
<keyword id="KW-0903">Direct protein sequencing</keyword>
<keyword id="KW-1185">Reference proteome</keyword>
<keyword id="KW-0687">Ribonucleoprotein</keyword>
<keyword id="KW-0689">Ribosomal protein</keyword>
<evidence type="ECO:0000305" key="1"/>